<reference key="1">
    <citation type="journal article" date="2008" name="J. Bacteriol.">
        <title>Genome sequence of the chemolithoautotrophic bacterium Oligotropha carboxidovorans OM5T.</title>
        <authorList>
            <person name="Paul D."/>
            <person name="Bridges S."/>
            <person name="Burgess S.C."/>
            <person name="Dandass Y."/>
            <person name="Lawrence M.L."/>
        </authorList>
    </citation>
    <scope>NUCLEOTIDE SEQUENCE [LARGE SCALE GENOMIC DNA]</scope>
    <source>
        <strain>ATCC 49405 / DSM 1227 / KCTC 32145 / OM5</strain>
    </source>
</reference>
<reference key="2">
    <citation type="journal article" date="2011" name="J. Bacteriol.">
        <title>Complete genome sequences of the chemolithoautotrophic Oligotropha carboxidovorans strains OM4 and OM5.</title>
        <authorList>
            <person name="Volland S."/>
            <person name="Rachinger M."/>
            <person name="Strittmatter A."/>
            <person name="Daniel R."/>
            <person name="Gottschalk G."/>
            <person name="Meyer O."/>
        </authorList>
    </citation>
    <scope>NUCLEOTIDE SEQUENCE [LARGE SCALE GENOMIC DNA]</scope>
    <source>
        <strain>ATCC 49405 / DSM 1227 / KCTC 32145 / OM5</strain>
    </source>
</reference>
<sequence length="271" mass="29959">MSAPRPVYDPSWDRANPNEVRRSIRERGYTGYTAGLAPGFVQANICILPKDWAEDFLLFCQRNPKPCPLLTRSDVGDPSLPALSDNIDIRTDVPRYQIFRNGEFTEEVTDIRSHWRDDLVTFAFGCSFSFEEALQDDGIPLRFLANNNVAGVYVSTMPTEAAGPFEAPLIVTMRSFTPQNAIRAIQITSRFPNVHGAPVHIGDPAQIGVDLAKRYQNVGDPTVGEGEIPVFWACGLTPQFAVMKAKPPFCITHAPSSMLVTDLRNSSLAVM</sequence>
<evidence type="ECO:0000255" key="1">
    <source>
        <dbReference type="HAMAP-Rule" id="MF_01830"/>
    </source>
</evidence>
<gene>
    <name type="ordered locus">OCAR_7359</name>
    <name type="ordered locus">OCA5_c07590</name>
</gene>
<proteinExistence type="inferred from homology"/>
<feature type="chain" id="PRO_0000379849" description="Putative hydro-lyase OCAR_7359/OCA5_c07590">
    <location>
        <begin position="1"/>
        <end position="271"/>
    </location>
</feature>
<keyword id="KW-0456">Lyase</keyword>
<keyword id="KW-1185">Reference proteome</keyword>
<protein>
    <recommendedName>
        <fullName evidence="1">Putative hydro-lyase OCAR_7359/OCA5_c07590</fullName>
        <ecNumber evidence="1">4.2.1.-</ecNumber>
    </recommendedName>
</protein>
<accession>B6JJ68</accession>
<accession>F8BYK2</accession>
<dbReference type="EC" id="4.2.1.-" evidence="1"/>
<dbReference type="EMBL" id="CP001196">
    <property type="protein sequence ID" value="ACI94462.1"/>
    <property type="molecule type" value="Genomic_DNA"/>
</dbReference>
<dbReference type="EMBL" id="CP002826">
    <property type="protein sequence ID" value="AEI05482.1"/>
    <property type="molecule type" value="Genomic_DNA"/>
</dbReference>
<dbReference type="RefSeq" id="WP_012564488.1">
    <property type="nucleotide sequence ID" value="NC_015684.1"/>
</dbReference>
<dbReference type="SMR" id="B6JJ68"/>
<dbReference type="STRING" id="504832.OCA5_c07590"/>
<dbReference type="KEGG" id="oca:OCAR_7359"/>
<dbReference type="KEGG" id="ocg:OCA5_c07590"/>
<dbReference type="PATRIC" id="fig|504832.7.peg.805"/>
<dbReference type="eggNOG" id="COG4336">
    <property type="taxonomic scope" value="Bacteria"/>
</dbReference>
<dbReference type="HOGENOM" id="CLU_059759_0_0_5"/>
<dbReference type="OrthoDB" id="149585at2"/>
<dbReference type="Proteomes" id="UP000007730">
    <property type="component" value="Chromosome"/>
</dbReference>
<dbReference type="GO" id="GO:0016829">
    <property type="term" value="F:lyase activity"/>
    <property type="evidence" value="ECO:0007669"/>
    <property type="project" value="UniProtKB-KW"/>
</dbReference>
<dbReference type="Gene3D" id="3.40.1640.10">
    <property type="entry name" value="PSTPO5379-like"/>
    <property type="match status" value="1"/>
</dbReference>
<dbReference type="Gene3D" id="3.30.2040.10">
    <property type="entry name" value="PSTPO5379-like domain"/>
    <property type="match status" value="1"/>
</dbReference>
<dbReference type="HAMAP" id="MF_01830">
    <property type="entry name" value="Hydro_lyase"/>
    <property type="match status" value="1"/>
</dbReference>
<dbReference type="InterPro" id="IPR009906">
    <property type="entry name" value="D-Glu_cyclase"/>
</dbReference>
<dbReference type="InterPro" id="IPR038021">
    <property type="entry name" value="Putative_hydro-lyase"/>
</dbReference>
<dbReference type="InterPro" id="IPR016938">
    <property type="entry name" value="UPF0317"/>
</dbReference>
<dbReference type="NCBIfam" id="NF003969">
    <property type="entry name" value="PRK05463.1"/>
    <property type="match status" value="1"/>
</dbReference>
<dbReference type="PANTHER" id="PTHR32022">
    <property type="entry name" value="D-GLUTAMATE CYCLASE, MITOCHONDRIAL"/>
    <property type="match status" value="1"/>
</dbReference>
<dbReference type="PANTHER" id="PTHR32022:SF10">
    <property type="entry name" value="D-GLUTAMATE CYCLASE, MITOCHONDRIAL"/>
    <property type="match status" value="1"/>
</dbReference>
<dbReference type="Pfam" id="PF07286">
    <property type="entry name" value="D-Glu_cyclase"/>
    <property type="match status" value="1"/>
</dbReference>
<dbReference type="PIRSF" id="PIRSF029755">
    <property type="entry name" value="UCP029755"/>
    <property type="match status" value="1"/>
</dbReference>
<dbReference type="SUPFAM" id="SSF160920">
    <property type="entry name" value="PSTPO5379-like"/>
    <property type="match status" value="1"/>
</dbReference>
<comment type="similarity">
    <text evidence="1">Belongs to the D-glutamate cyclase family.</text>
</comment>
<name>Y7359_AFIC5</name>
<organism>
    <name type="scientific">Afipia carboxidovorans (strain ATCC 49405 / DSM 1227 / KCTC 32145 / OM5)</name>
    <name type="common">Oligotropha carboxidovorans</name>
    <dbReference type="NCBI Taxonomy" id="504832"/>
    <lineage>
        <taxon>Bacteria</taxon>
        <taxon>Pseudomonadati</taxon>
        <taxon>Pseudomonadota</taxon>
        <taxon>Alphaproteobacteria</taxon>
        <taxon>Hyphomicrobiales</taxon>
        <taxon>Nitrobacteraceae</taxon>
        <taxon>Afipia</taxon>
    </lineage>
</organism>